<reference key="1">
    <citation type="journal article" date="1993" name="Mol. Microbiol.">
        <title>Yersinia pestis pH 6 antigen forms fimbriae and is induced by intracellular association with macrophages.</title>
        <authorList>
            <person name="Lindler L.E."/>
            <person name="Tall B.D."/>
        </authorList>
    </citation>
    <scope>NUCLEOTIDE SEQUENCE [GENOMIC DNA]</scope>
    <source>
        <strain>KIM5 / Biovar Mediaevalis</strain>
    </source>
</reference>
<reference key="2">
    <citation type="submission" date="1996-05" db="EMBL/GenBank/DDBJ databases">
        <authorList>
            <person name="Cherepavov P.A."/>
        </authorList>
    </citation>
    <scope>NUCLEOTIDE SEQUENCE [GENOMIC DNA]</scope>
    <source>
        <strain>EV 76</strain>
    </source>
</reference>
<reference key="3">
    <citation type="journal article" date="2001" name="Nature">
        <title>Genome sequence of Yersinia pestis, the causative agent of plague.</title>
        <authorList>
            <person name="Parkhill J."/>
            <person name="Wren B.W."/>
            <person name="Thomson N.R."/>
            <person name="Titball R.W."/>
            <person name="Holden M.T.G."/>
            <person name="Prentice M.B."/>
            <person name="Sebaihia M."/>
            <person name="James K.D."/>
            <person name="Churcher C.M."/>
            <person name="Mungall K.L."/>
            <person name="Baker S."/>
            <person name="Basham D."/>
            <person name="Bentley S.D."/>
            <person name="Brooks K."/>
            <person name="Cerdeno-Tarraga A.-M."/>
            <person name="Chillingworth T."/>
            <person name="Cronin A."/>
            <person name="Davies R.M."/>
            <person name="Davis P."/>
            <person name="Dougan G."/>
            <person name="Feltwell T."/>
            <person name="Hamlin N."/>
            <person name="Holroyd S."/>
            <person name="Jagels K."/>
            <person name="Karlyshev A.V."/>
            <person name="Leather S."/>
            <person name="Moule S."/>
            <person name="Oyston P.C.F."/>
            <person name="Quail M.A."/>
            <person name="Rutherford K.M."/>
            <person name="Simmonds M."/>
            <person name="Skelton J."/>
            <person name="Stevens K."/>
            <person name="Whitehead S."/>
            <person name="Barrell B.G."/>
        </authorList>
    </citation>
    <scope>NUCLEOTIDE SEQUENCE [LARGE SCALE GENOMIC DNA]</scope>
    <source>
        <strain>CO-92 / Biovar Orientalis</strain>
    </source>
</reference>
<reference key="4">
    <citation type="journal article" date="2002" name="J. Bacteriol.">
        <title>Genome sequence of Yersinia pestis KIM.</title>
        <authorList>
            <person name="Deng W."/>
            <person name="Burland V."/>
            <person name="Plunkett G. III"/>
            <person name="Boutin A."/>
            <person name="Mayhew G.F."/>
            <person name="Liss P."/>
            <person name="Perna N.T."/>
            <person name="Rose D.J."/>
            <person name="Mau B."/>
            <person name="Zhou S."/>
            <person name="Schwartz D.C."/>
            <person name="Fetherston J.D."/>
            <person name="Lindler L.E."/>
            <person name="Brubaker R.R."/>
            <person name="Plano G.V."/>
            <person name="Straley S.C."/>
            <person name="McDonough K.A."/>
            <person name="Nilles M.L."/>
            <person name="Matson J.S."/>
            <person name="Blattner F.R."/>
            <person name="Perry R.D."/>
        </authorList>
    </citation>
    <scope>NUCLEOTIDE SEQUENCE [LARGE SCALE GENOMIC DNA]</scope>
    <source>
        <strain>KIM10+ / Biovar Mediaevalis</strain>
    </source>
</reference>
<reference key="5">
    <citation type="journal article" date="2004" name="DNA Res.">
        <title>Complete genome sequence of Yersinia pestis strain 91001, an isolate avirulent to humans.</title>
        <authorList>
            <person name="Song Y."/>
            <person name="Tong Z."/>
            <person name="Wang J."/>
            <person name="Wang L."/>
            <person name="Guo Z."/>
            <person name="Han Y."/>
            <person name="Zhang J."/>
            <person name="Pei D."/>
            <person name="Zhou D."/>
            <person name="Qin H."/>
            <person name="Pang X."/>
            <person name="Han Y."/>
            <person name="Zhai J."/>
            <person name="Li M."/>
            <person name="Cui B."/>
            <person name="Qi Z."/>
            <person name="Jin L."/>
            <person name="Dai R."/>
            <person name="Chen F."/>
            <person name="Li S."/>
            <person name="Ye C."/>
            <person name="Du Z."/>
            <person name="Lin W."/>
            <person name="Wang J."/>
            <person name="Yu J."/>
            <person name="Yang H."/>
            <person name="Wang J."/>
            <person name="Huang P."/>
            <person name="Yang R."/>
        </authorList>
    </citation>
    <scope>NUCLEOTIDE SEQUENCE [LARGE SCALE GENOMIC DNA]</scope>
    <source>
        <strain>91001 / Biovar Mediaevalis</strain>
    </source>
</reference>
<protein>
    <recommendedName>
        <fullName>pH 6 antigen</fullName>
    </recommendedName>
    <alternativeName>
        <fullName>Adhesin</fullName>
    </alternativeName>
    <alternativeName>
        <fullName>Antigen 4</fullName>
    </alternativeName>
</protein>
<gene>
    <name type="primary">psaA</name>
    <name type="ordered locus">YPO1303</name>
    <name type="ordered locus">y2882</name>
    <name type="ordered locus">YP_1289</name>
</gene>
<keyword id="KW-0002">3D-structure</keyword>
<keyword id="KW-0281">Fimbrium</keyword>
<keyword id="KW-1185">Reference proteome</keyword>
<keyword id="KW-0732">Signal</keyword>
<keyword id="KW-0843">Virulence</keyword>
<accession>P31522</accession>
<accession>Q0WHB0</accession>
<comment type="function">
    <text>Fibrillar structure, part of fimbriae, necessary for full virulence.</text>
</comment>
<comment type="subunit">
    <text>Forms a homomer composed of subunits assembled in a large structure.</text>
</comment>
<comment type="subcellular location">
    <subcellularLocation>
        <location>Fimbrium</location>
    </subcellularLocation>
</comment>
<comment type="induction">
    <text>Expressed inside macrophages under acidic pH and at 37 degrees Celsius.</text>
</comment>
<comment type="sequence caution" evidence="1">
    <conflict type="erroneous initiation">
        <sequence resource="EMBL-CDS" id="AAM86433"/>
    </conflict>
</comment>
<comment type="sequence caution" evidence="1">
    <conflict type="erroneous initiation">
        <sequence resource="EMBL-CDS" id="AAS61532"/>
    </conflict>
</comment>
<feature type="signal peptide">
    <location>
        <begin position="1"/>
        <end position="26"/>
    </location>
</feature>
<feature type="chain" id="PRO_0000009240" description="pH 6 antigen">
    <location>
        <begin position="27"/>
        <end position="158"/>
    </location>
</feature>
<feature type="strand" evidence="4">
    <location>
        <begin position="27"/>
        <end position="42"/>
    </location>
</feature>
<feature type="strand" evidence="2">
    <location>
        <begin position="48"/>
        <end position="53"/>
    </location>
</feature>
<feature type="strand" evidence="2">
    <location>
        <begin position="59"/>
        <end position="62"/>
    </location>
</feature>
<feature type="strand" evidence="2">
    <location>
        <begin position="67"/>
        <end position="75"/>
    </location>
</feature>
<feature type="strand" evidence="2">
    <location>
        <begin position="82"/>
        <end position="87"/>
    </location>
</feature>
<feature type="helix" evidence="2">
    <location>
        <begin position="89"/>
        <end position="91"/>
    </location>
</feature>
<feature type="turn" evidence="2">
    <location>
        <begin position="92"/>
        <end position="94"/>
    </location>
</feature>
<feature type="strand" evidence="2">
    <location>
        <begin position="95"/>
        <end position="98"/>
    </location>
</feature>
<feature type="strand" evidence="2">
    <location>
        <begin position="103"/>
        <end position="105"/>
    </location>
</feature>
<feature type="strand" evidence="2">
    <location>
        <begin position="107"/>
        <end position="114"/>
    </location>
</feature>
<feature type="helix" evidence="2">
    <location>
        <begin position="115"/>
        <end position="117"/>
    </location>
</feature>
<feature type="strand" evidence="2">
    <location>
        <begin position="119"/>
        <end position="123"/>
    </location>
</feature>
<feature type="strand" evidence="3">
    <location>
        <begin position="126"/>
        <end position="128"/>
    </location>
</feature>
<feature type="strand" evidence="2">
    <location>
        <begin position="130"/>
        <end position="136"/>
    </location>
</feature>
<feature type="strand" evidence="2">
    <location>
        <begin position="144"/>
        <end position="158"/>
    </location>
</feature>
<evidence type="ECO:0000305" key="1"/>
<evidence type="ECO:0007829" key="2">
    <source>
        <dbReference type="PDB" id="4F8L"/>
    </source>
</evidence>
<evidence type="ECO:0007829" key="3">
    <source>
        <dbReference type="PDB" id="4F8N"/>
    </source>
</evidence>
<evidence type="ECO:0007829" key="4">
    <source>
        <dbReference type="PDB" id="5LN4"/>
    </source>
</evidence>
<sequence length="158" mass="17233">MKMKCFAKNALAVTTLMIAACGMANASTVINSKDVSGEVTVKQGNTFHVDFAPNTGEIFAGKQPGDVTMFTLTMGDTAPHGGWRLIPTGDSKGGYMISADGDYVGLYSYMMSWVGIDNNWYINDDSPKDIKDHLYVKAGTVLKPTTYKFTGRVEEYVF</sequence>
<proteinExistence type="evidence at protein level"/>
<organism>
    <name type="scientific">Yersinia pestis</name>
    <dbReference type="NCBI Taxonomy" id="632"/>
    <lineage>
        <taxon>Bacteria</taxon>
        <taxon>Pseudomonadati</taxon>
        <taxon>Pseudomonadota</taxon>
        <taxon>Gammaproteobacteria</taxon>
        <taxon>Enterobacterales</taxon>
        <taxon>Yersiniaceae</taxon>
        <taxon>Yersinia</taxon>
    </lineage>
</organism>
<dbReference type="EMBL" id="M86713">
    <property type="protein sequence ID" value="AAA27662.1"/>
    <property type="molecule type" value="Genomic_DNA"/>
</dbReference>
<dbReference type="EMBL" id="X97759">
    <property type="protein sequence ID" value="CAA66355.1"/>
    <property type="molecule type" value="Genomic_DNA"/>
</dbReference>
<dbReference type="EMBL" id="AL590842">
    <property type="protein sequence ID" value="CAL19956.1"/>
    <property type="molecule type" value="Genomic_DNA"/>
</dbReference>
<dbReference type="EMBL" id="AE009952">
    <property type="protein sequence ID" value="AAM86433.1"/>
    <property type="status" value="ALT_INIT"/>
    <property type="molecule type" value="Genomic_DNA"/>
</dbReference>
<dbReference type="EMBL" id="AE017042">
    <property type="protein sequence ID" value="AAS61532.1"/>
    <property type="status" value="ALT_INIT"/>
    <property type="molecule type" value="Genomic_DNA"/>
</dbReference>
<dbReference type="PIR" id="AB0159">
    <property type="entry name" value="AB0159"/>
</dbReference>
<dbReference type="PIR" id="S32926">
    <property type="entry name" value="S32926"/>
</dbReference>
<dbReference type="RefSeq" id="WP_002208794.1">
    <property type="nucleotide sequence ID" value="NZ_WUCM01000013.1"/>
</dbReference>
<dbReference type="RefSeq" id="YP_002346328.1">
    <property type="nucleotide sequence ID" value="NC_003143.1"/>
</dbReference>
<dbReference type="PDB" id="4F8L">
    <property type="method" value="X-ray"/>
    <property type="resolution" value="1.50 A"/>
    <property type="chains" value="A=27-158"/>
</dbReference>
<dbReference type="PDB" id="4F8N">
    <property type="method" value="X-ray"/>
    <property type="resolution" value="2.50 A"/>
    <property type="chains" value="A=27-158"/>
</dbReference>
<dbReference type="PDB" id="4F8O">
    <property type="method" value="X-ray"/>
    <property type="resolution" value="1.90 A"/>
    <property type="chains" value="A=27-158"/>
</dbReference>
<dbReference type="PDB" id="4F8P">
    <property type="method" value="X-ray"/>
    <property type="resolution" value="2.05 A"/>
    <property type="chains" value="A/B=27-158"/>
</dbReference>
<dbReference type="PDB" id="5LN4">
    <property type="method" value="X-ray"/>
    <property type="resolution" value="2.36 A"/>
    <property type="chains" value="A/B/C=27-42, A/B/C=46-158"/>
</dbReference>
<dbReference type="PDBsum" id="4F8L"/>
<dbReference type="PDBsum" id="4F8N"/>
<dbReference type="PDBsum" id="4F8O"/>
<dbReference type="PDBsum" id="4F8P"/>
<dbReference type="PDBsum" id="5LN4"/>
<dbReference type="SMR" id="P31522"/>
<dbReference type="IntAct" id="P31522">
    <property type="interactions" value="1"/>
</dbReference>
<dbReference type="MINT" id="P31522"/>
<dbReference type="STRING" id="214092.YPO1303"/>
<dbReference type="UniLectin" id="P31522"/>
<dbReference type="PaxDb" id="214092-YPO1303"/>
<dbReference type="DNASU" id="1147829"/>
<dbReference type="EnsemblBacteria" id="AAS61532">
    <property type="protein sequence ID" value="AAS61532"/>
    <property type="gene ID" value="YP_1289"/>
</dbReference>
<dbReference type="GeneID" id="57977435"/>
<dbReference type="KEGG" id="ype:YPO1303"/>
<dbReference type="KEGG" id="ypk:y2882"/>
<dbReference type="KEGG" id="ypm:YP_1289"/>
<dbReference type="PATRIC" id="fig|214092.21.peg.1613"/>
<dbReference type="eggNOG" id="ENOG5030CGZ">
    <property type="taxonomic scope" value="Bacteria"/>
</dbReference>
<dbReference type="HOGENOM" id="CLU_1660052_0_0_6"/>
<dbReference type="OrthoDB" id="6481158at2"/>
<dbReference type="EvolutionaryTrace" id="P31522"/>
<dbReference type="Proteomes" id="UP000000815">
    <property type="component" value="Chromosome"/>
</dbReference>
<dbReference type="Proteomes" id="UP000001019">
    <property type="component" value="Chromosome"/>
</dbReference>
<dbReference type="Proteomes" id="UP000002490">
    <property type="component" value="Chromosome"/>
</dbReference>
<dbReference type="GO" id="GO:0009289">
    <property type="term" value="C:pilus"/>
    <property type="evidence" value="ECO:0007669"/>
    <property type="project" value="UniProtKB-SubCell"/>
</dbReference>
<dbReference type="CDD" id="cd18777">
    <property type="entry name" value="PsaA_MyfA"/>
    <property type="match status" value="1"/>
</dbReference>
<dbReference type="Gene3D" id="2.60.40.3590">
    <property type="match status" value="2"/>
</dbReference>
<dbReference type="InterPro" id="IPR053731">
    <property type="entry name" value="Fimbrial_Virulence_Factor"/>
</dbReference>
<dbReference type="InterPro" id="IPR048725">
    <property type="entry name" value="MyfA_PsaA"/>
</dbReference>
<dbReference type="NCBIfam" id="NF037938">
    <property type="entry name" value="Myr_Ysa_major"/>
    <property type="match status" value="1"/>
</dbReference>
<dbReference type="Pfam" id="PF21462">
    <property type="entry name" value="PsaS"/>
    <property type="match status" value="1"/>
</dbReference>
<dbReference type="PROSITE" id="PS51257">
    <property type="entry name" value="PROKAR_LIPOPROTEIN"/>
    <property type="match status" value="1"/>
</dbReference>
<name>PSAA_YERPE</name>